<dbReference type="EC" id="3.6.1.31" evidence="1"/>
<dbReference type="EMBL" id="FM177140">
    <property type="protein sequence ID" value="CAQ66730.1"/>
    <property type="molecule type" value="Genomic_DNA"/>
</dbReference>
<dbReference type="SMR" id="B3WEC9"/>
<dbReference type="KEGG" id="lcb:LCABL_16490"/>
<dbReference type="HOGENOM" id="CLU_123337_0_0_9"/>
<dbReference type="UniPathway" id="UPA00031">
    <property type="reaction ID" value="UER00007"/>
</dbReference>
<dbReference type="GO" id="GO:0005737">
    <property type="term" value="C:cytoplasm"/>
    <property type="evidence" value="ECO:0007669"/>
    <property type="project" value="UniProtKB-SubCell"/>
</dbReference>
<dbReference type="GO" id="GO:0005524">
    <property type="term" value="F:ATP binding"/>
    <property type="evidence" value="ECO:0007669"/>
    <property type="project" value="UniProtKB-KW"/>
</dbReference>
<dbReference type="GO" id="GO:0004636">
    <property type="term" value="F:phosphoribosyl-ATP diphosphatase activity"/>
    <property type="evidence" value="ECO:0007669"/>
    <property type="project" value="UniProtKB-UniRule"/>
</dbReference>
<dbReference type="GO" id="GO:0000105">
    <property type="term" value="P:L-histidine biosynthetic process"/>
    <property type="evidence" value="ECO:0007669"/>
    <property type="project" value="UniProtKB-UniRule"/>
</dbReference>
<dbReference type="CDD" id="cd11534">
    <property type="entry name" value="NTP-PPase_HisIE_like"/>
    <property type="match status" value="1"/>
</dbReference>
<dbReference type="Gene3D" id="1.10.287.1080">
    <property type="entry name" value="MazG-like"/>
    <property type="match status" value="1"/>
</dbReference>
<dbReference type="HAMAP" id="MF_01020">
    <property type="entry name" value="HisE"/>
    <property type="match status" value="1"/>
</dbReference>
<dbReference type="InterPro" id="IPR008179">
    <property type="entry name" value="HisE"/>
</dbReference>
<dbReference type="InterPro" id="IPR021130">
    <property type="entry name" value="PRib-ATP_PPHydrolase-like"/>
</dbReference>
<dbReference type="NCBIfam" id="TIGR03188">
    <property type="entry name" value="histidine_hisI"/>
    <property type="match status" value="1"/>
</dbReference>
<dbReference type="PANTHER" id="PTHR42945">
    <property type="entry name" value="HISTIDINE BIOSYNTHESIS BIFUNCTIONAL PROTEIN"/>
    <property type="match status" value="1"/>
</dbReference>
<dbReference type="PANTHER" id="PTHR42945:SF9">
    <property type="entry name" value="HISTIDINE BIOSYNTHESIS BIFUNCTIONAL PROTEIN HISIE"/>
    <property type="match status" value="1"/>
</dbReference>
<dbReference type="Pfam" id="PF01503">
    <property type="entry name" value="PRA-PH"/>
    <property type="match status" value="1"/>
</dbReference>
<dbReference type="SUPFAM" id="SSF101386">
    <property type="entry name" value="all-alpha NTP pyrophosphatases"/>
    <property type="match status" value="1"/>
</dbReference>
<evidence type="ECO:0000255" key="1">
    <source>
        <dbReference type="HAMAP-Rule" id="MF_01020"/>
    </source>
</evidence>
<name>HIS2_LACCB</name>
<protein>
    <recommendedName>
        <fullName evidence="1">Phosphoribosyl-ATP pyrophosphatase</fullName>
        <shortName evidence="1">PRA-PH</shortName>
        <ecNumber evidence="1">3.6.1.31</ecNumber>
    </recommendedName>
</protein>
<keyword id="KW-0028">Amino-acid biosynthesis</keyword>
<keyword id="KW-0067">ATP-binding</keyword>
<keyword id="KW-0963">Cytoplasm</keyword>
<keyword id="KW-0368">Histidine biosynthesis</keyword>
<keyword id="KW-0378">Hydrolase</keyword>
<keyword id="KW-0547">Nucleotide-binding</keyword>
<proteinExistence type="inferred from homology"/>
<comment type="catalytic activity">
    <reaction evidence="1">
        <text>1-(5-phospho-beta-D-ribosyl)-ATP + H2O = 1-(5-phospho-beta-D-ribosyl)-5'-AMP + diphosphate + H(+)</text>
        <dbReference type="Rhea" id="RHEA:22828"/>
        <dbReference type="ChEBI" id="CHEBI:15377"/>
        <dbReference type="ChEBI" id="CHEBI:15378"/>
        <dbReference type="ChEBI" id="CHEBI:33019"/>
        <dbReference type="ChEBI" id="CHEBI:59457"/>
        <dbReference type="ChEBI" id="CHEBI:73183"/>
        <dbReference type="EC" id="3.6.1.31"/>
    </reaction>
</comment>
<comment type="pathway">
    <text evidence="1">Amino-acid biosynthesis; L-histidine biosynthesis; L-histidine from 5-phospho-alpha-D-ribose 1-diphosphate: step 2/9.</text>
</comment>
<comment type="subcellular location">
    <subcellularLocation>
        <location evidence="1">Cytoplasm</location>
    </subcellularLocation>
</comment>
<comment type="similarity">
    <text evidence="1">Belongs to the PRA-PH family.</text>
</comment>
<feature type="chain" id="PRO_1000190377" description="Phosphoribosyl-ATP pyrophosphatase">
    <location>
        <begin position="1"/>
        <end position="110"/>
    </location>
</feature>
<reference key="1">
    <citation type="submission" date="2008-06" db="EMBL/GenBank/DDBJ databases">
        <title>Lactobacillus casei BL23 complete genome sequence.</title>
        <authorList>
            <person name="Maze A."/>
            <person name="Boel G."/>
            <person name="Bourand A."/>
            <person name="Loux V."/>
            <person name="Gibrat J.F."/>
            <person name="Zuniga M."/>
            <person name="Hartke A."/>
            <person name="Deutscher J."/>
        </authorList>
    </citation>
    <scope>NUCLEOTIDE SEQUENCE [LARGE SCALE GENOMIC DNA]</scope>
    <source>
        <strain>BL23</strain>
    </source>
</reference>
<organism>
    <name type="scientific">Lacticaseibacillus casei (strain BL23)</name>
    <name type="common">Lactobacillus casei</name>
    <dbReference type="NCBI Taxonomy" id="543734"/>
    <lineage>
        <taxon>Bacteria</taxon>
        <taxon>Bacillati</taxon>
        <taxon>Bacillota</taxon>
        <taxon>Bacilli</taxon>
        <taxon>Lactobacillales</taxon>
        <taxon>Lactobacillaceae</taxon>
        <taxon>Lacticaseibacillus</taxon>
    </lineage>
</organism>
<sequence>MTQAKQSIPALYDFIKERQANPVAGSYTDYLFTKGLDKILKKVGEESTEVIVAAKNPDDPAFILEVADLTYHVLVLMVERGITVDQIATELASREGKKSRLQERSKIEKY</sequence>
<gene>
    <name evidence="1" type="primary">hisE</name>
    <name type="ordered locus">LCABL_16490</name>
</gene>
<accession>B3WEC9</accession>